<reference key="1">
    <citation type="journal article" date="2000" name="Proc. Natl. Acad. Sci. U.S.A.">
        <title>Independent adaptation to riverine habitats allowed survival of ancient cetacean lineages.</title>
        <authorList>
            <person name="Cassens I."/>
            <person name="Vicario S."/>
            <person name="Waddell V.G."/>
            <person name="Balchowsky H."/>
            <person name="Van Belle D."/>
            <person name="Ding W."/>
            <person name="Fan C."/>
            <person name="Mohan L."/>
            <person name="Simoes-Lopes P.C."/>
            <person name="Bastida R."/>
            <person name="Meyer A."/>
            <person name="Stanhope M.J."/>
            <person name="Milinkovitch M.C."/>
        </authorList>
    </citation>
    <scope>NUCLEOTIDE SEQUENCE [GENOMIC DNA]</scope>
</reference>
<reference key="2">
    <citation type="journal article" date="1994" name="Mol. Biol. Evol.">
        <title>Phylogeny of all major groups of cetaceans based on DNA sequences from three mitochondrial genes.</title>
        <authorList>
            <person name="Milinkovitch M.C."/>
            <person name="Meyer A."/>
            <person name="Powell J.R."/>
        </authorList>
    </citation>
    <scope>NUCLEOTIDE SEQUENCE [GENOMIC DNA] OF 1-134</scope>
</reference>
<protein>
    <recommendedName>
        <fullName>Cytochrome b</fullName>
    </recommendedName>
    <alternativeName>
        <fullName>Complex III subunit 3</fullName>
    </alternativeName>
    <alternativeName>
        <fullName>Complex III subunit III</fullName>
    </alternativeName>
    <alternativeName>
        <fullName>Cytochrome b-c1 complex subunit 3</fullName>
    </alternativeName>
    <alternativeName>
        <fullName>Ubiquinol-cytochrome-c reductase complex cytochrome b subunit</fullName>
    </alternativeName>
</protein>
<name>CYB_ZIPCA</name>
<dbReference type="EMBL" id="AF304075">
    <property type="protein sequence ID" value="AAC48456.2"/>
    <property type="molecule type" value="Genomic_DNA"/>
</dbReference>
<dbReference type="SMR" id="Q36262"/>
<dbReference type="GO" id="GO:0005743">
    <property type="term" value="C:mitochondrial inner membrane"/>
    <property type="evidence" value="ECO:0007669"/>
    <property type="project" value="UniProtKB-SubCell"/>
</dbReference>
<dbReference type="GO" id="GO:0045275">
    <property type="term" value="C:respiratory chain complex III"/>
    <property type="evidence" value="ECO:0007669"/>
    <property type="project" value="InterPro"/>
</dbReference>
<dbReference type="GO" id="GO:0046872">
    <property type="term" value="F:metal ion binding"/>
    <property type="evidence" value="ECO:0007669"/>
    <property type="project" value="UniProtKB-KW"/>
</dbReference>
<dbReference type="GO" id="GO:0008121">
    <property type="term" value="F:ubiquinol-cytochrome-c reductase activity"/>
    <property type="evidence" value="ECO:0007669"/>
    <property type="project" value="InterPro"/>
</dbReference>
<dbReference type="GO" id="GO:0006122">
    <property type="term" value="P:mitochondrial electron transport, ubiquinol to cytochrome c"/>
    <property type="evidence" value="ECO:0007669"/>
    <property type="project" value="TreeGrafter"/>
</dbReference>
<dbReference type="CDD" id="cd00290">
    <property type="entry name" value="cytochrome_b_C"/>
    <property type="match status" value="1"/>
</dbReference>
<dbReference type="CDD" id="cd00284">
    <property type="entry name" value="Cytochrome_b_N"/>
    <property type="match status" value="1"/>
</dbReference>
<dbReference type="FunFam" id="1.20.810.10:FF:000002">
    <property type="entry name" value="Cytochrome b"/>
    <property type="match status" value="1"/>
</dbReference>
<dbReference type="Gene3D" id="1.20.810.10">
    <property type="entry name" value="Cytochrome Bc1 Complex, Chain C"/>
    <property type="match status" value="1"/>
</dbReference>
<dbReference type="InterPro" id="IPR005798">
    <property type="entry name" value="Cyt_b/b6_C"/>
</dbReference>
<dbReference type="InterPro" id="IPR036150">
    <property type="entry name" value="Cyt_b/b6_C_sf"/>
</dbReference>
<dbReference type="InterPro" id="IPR005797">
    <property type="entry name" value="Cyt_b/b6_N"/>
</dbReference>
<dbReference type="InterPro" id="IPR027387">
    <property type="entry name" value="Cytb/b6-like_sf"/>
</dbReference>
<dbReference type="InterPro" id="IPR030689">
    <property type="entry name" value="Cytochrome_b"/>
</dbReference>
<dbReference type="InterPro" id="IPR048260">
    <property type="entry name" value="Cytochrome_b_C_euk/bac"/>
</dbReference>
<dbReference type="InterPro" id="IPR048259">
    <property type="entry name" value="Cytochrome_b_N_euk/bac"/>
</dbReference>
<dbReference type="InterPro" id="IPR016174">
    <property type="entry name" value="Di-haem_cyt_TM"/>
</dbReference>
<dbReference type="PANTHER" id="PTHR19271">
    <property type="entry name" value="CYTOCHROME B"/>
    <property type="match status" value="1"/>
</dbReference>
<dbReference type="PANTHER" id="PTHR19271:SF16">
    <property type="entry name" value="CYTOCHROME B"/>
    <property type="match status" value="1"/>
</dbReference>
<dbReference type="Pfam" id="PF00032">
    <property type="entry name" value="Cytochrom_B_C"/>
    <property type="match status" value="1"/>
</dbReference>
<dbReference type="Pfam" id="PF00033">
    <property type="entry name" value="Cytochrome_B"/>
    <property type="match status" value="1"/>
</dbReference>
<dbReference type="PIRSF" id="PIRSF038885">
    <property type="entry name" value="COB"/>
    <property type="match status" value="1"/>
</dbReference>
<dbReference type="SUPFAM" id="SSF81648">
    <property type="entry name" value="a domain/subunit of cytochrome bc1 complex (Ubiquinol-cytochrome c reductase)"/>
    <property type="match status" value="1"/>
</dbReference>
<dbReference type="SUPFAM" id="SSF81342">
    <property type="entry name" value="Transmembrane di-heme cytochromes"/>
    <property type="match status" value="1"/>
</dbReference>
<dbReference type="PROSITE" id="PS51003">
    <property type="entry name" value="CYTB_CTER"/>
    <property type="match status" value="1"/>
</dbReference>
<dbReference type="PROSITE" id="PS51002">
    <property type="entry name" value="CYTB_NTER"/>
    <property type="match status" value="1"/>
</dbReference>
<organism>
    <name type="scientific">Ziphius cavirostris</name>
    <name type="common">Cuvier's beaked whale</name>
    <name type="synonym">Goose-beaked whale</name>
    <dbReference type="NCBI Taxonomy" id="9760"/>
    <lineage>
        <taxon>Eukaryota</taxon>
        <taxon>Metazoa</taxon>
        <taxon>Chordata</taxon>
        <taxon>Craniata</taxon>
        <taxon>Vertebrata</taxon>
        <taxon>Euteleostomi</taxon>
        <taxon>Mammalia</taxon>
        <taxon>Eutheria</taxon>
        <taxon>Laurasiatheria</taxon>
        <taxon>Artiodactyla</taxon>
        <taxon>Whippomorpha</taxon>
        <taxon>Cetacea</taxon>
        <taxon>Odontoceti</taxon>
        <taxon>Ziphiidae</taxon>
        <taxon>Ziphius</taxon>
    </lineage>
</organism>
<keyword id="KW-0249">Electron transport</keyword>
<keyword id="KW-0349">Heme</keyword>
<keyword id="KW-0408">Iron</keyword>
<keyword id="KW-0472">Membrane</keyword>
<keyword id="KW-0479">Metal-binding</keyword>
<keyword id="KW-0496">Mitochondrion</keyword>
<keyword id="KW-0999">Mitochondrion inner membrane</keyword>
<keyword id="KW-0679">Respiratory chain</keyword>
<keyword id="KW-0812">Transmembrane</keyword>
<keyword id="KW-1133">Transmembrane helix</keyword>
<keyword id="KW-0813">Transport</keyword>
<keyword id="KW-0830">Ubiquinone</keyword>
<evidence type="ECO:0000250" key="1"/>
<evidence type="ECO:0000250" key="2">
    <source>
        <dbReference type="UniProtKB" id="P00157"/>
    </source>
</evidence>
<evidence type="ECO:0000255" key="3">
    <source>
        <dbReference type="PROSITE-ProRule" id="PRU00967"/>
    </source>
</evidence>
<evidence type="ECO:0000255" key="4">
    <source>
        <dbReference type="PROSITE-ProRule" id="PRU00968"/>
    </source>
</evidence>
<accession>Q36262</accession>
<gene>
    <name type="primary">MT-CYB</name>
    <name type="synonym">COB</name>
    <name type="synonym">CYTB</name>
    <name type="synonym">MTCYB</name>
</gene>
<sequence>MTNIRKTHPLMKIINNAFIDLPTPSNISSWWNFGSLLGLCLIMQILTGLFLAMHYTPDTTTAFSSVAHICRDVNYGWIIRYLHANGASMFFICLYAHIGRGLYYGSYIFQETWNIGVILLLAVMATAFVGYVLPWGQMSFWGATVITNLLSAIPYIGTTLVEWIWGGFSVDKATLTRFFAFHFILPFIILALAAVHLLFLHETGSNNPMGIPSDMDKIPFHPYYTIKDILGALLLIVILLALTLFAPDLLGDPDNYTPANPLSTPAHIKPEWYFLFAYAILRSIPNKLGGVLALFLSILVLLFIPLLHTSKQRSMMFRPFSQFLFWLLVADFLTLTWIGGQPVEHPYMILGQLASILYFLLILVLMPMASLIENKLLKW</sequence>
<proteinExistence type="inferred from homology"/>
<comment type="function">
    <text evidence="2">Component of the ubiquinol-cytochrome c reductase complex (complex III or cytochrome b-c1 complex) that is part of the mitochondrial respiratory chain. The b-c1 complex mediates electron transfer from ubiquinol to cytochrome c. Contributes to the generation of a proton gradient across the mitochondrial membrane that is then used for ATP synthesis.</text>
</comment>
<comment type="cofactor">
    <cofactor evidence="2">
        <name>heme b</name>
        <dbReference type="ChEBI" id="CHEBI:60344"/>
    </cofactor>
    <text evidence="2">Binds 2 heme b groups non-covalently.</text>
</comment>
<comment type="subunit">
    <text evidence="2">The cytochrome bc1 complex contains 11 subunits: 3 respiratory subunits (MT-CYB, CYC1 and UQCRFS1), 2 core proteins (UQCRC1 and UQCRC2) and 6 low-molecular weight proteins (UQCRH/QCR6, UQCRB/QCR7, UQCRQ/QCR8, UQCR10/QCR9, UQCR11/QCR10 and a cleavage product of UQCRFS1). This cytochrome bc1 complex then forms a dimer.</text>
</comment>
<comment type="subcellular location">
    <subcellularLocation>
        <location evidence="2">Mitochondrion inner membrane</location>
        <topology evidence="2">Multi-pass membrane protein</topology>
    </subcellularLocation>
</comment>
<comment type="miscellaneous">
    <text evidence="1">Heme 1 (or BL or b562) is low-potential and absorbs at about 562 nm, and heme 2 (or BH or b566) is high-potential and absorbs at about 566 nm.</text>
</comment>
<comment type="similarity">
    <text evidence="3 4">Belongs to the cytochrome b family.</text>
</comment>
<comment type="caution">
    <text evidence="2">The full-length protein contains only eight transmembrane helices, not nine as predicted by bioinformatics tools.</text>
</comment>
<feature type="chain" id="PRO_0000061731" description="Cytochrome b">
    <location>
        <begin position="1"/>
        <end position="379"/>
    </location>
</feature>
<feature type="transmembrane region" description="Helical" evidence="2">
    <location>
        <begin position="33"/>
        <end position="53"/>
    </location>
</feature>
<feature type="transmembrane region" description="Helical" evidence="2">
    <location>
        <begin position="77"/>
        <end position="98"/>
    </location>
</feature>
<feature type="transmembrane region" description="Helical" evidence="2">
    <location>
        <begin position="113"/>
        <end position="133"/>
    </location>
</feature>
<feature type="transmembrane region" description="Helical" evidence="2">
    <location>
        <begin position="178"/>
        <end position="198"/>
    </location>
</feature>
<feature type="transmembrane region" description="Helical" evidence="2">
    <location>
        <begin position="226"/>
        <end position="246"/>
    </location>
</feature>
<feature type="transmembrane region" description="Helical" evidence="2">
    <location>
        <begin position="288"/>
        <end position="308"/>
    </location>
</feature>
<feature type="transmembrane region" description="Helical" evidence="2">
    <location>
        <begin position="320"/>
        <end position="340"/>
    </location>
</feature>
<feature type="transmembrane region" description="Helical" evidence="2">
    <location>
        <begin position="347"/>
        <end position="367"/>
    </location>
</feature>
<feature type="binding site" description="axial binding residue" evidence="2">
    <location>
        <position position="83"/>
    </location>
    <ligand>
        <name>heme b</name>
        <dbReference type="ChEBI" id="CHEBI:60344"/>
        <label>b562</label>
    </ligand>
    <ligandPart>
        <name>Fe</name>
        <dbReference type="ChEBI" id="CHEBI:18248"/>
    </ligandPart>
</feature>
<feature type="binding site" description="axial binding residue" evidence="2">
    <location>
        <position position="97"/>
    </location>
    <ligand>
        <name>heme b</name>
        <dbReference type="ChEBI" id="CHEBI:60344"/>
        <label>b566</label>
    </ligand>
    <ligandPart>
        <name>Fe</name>
        <dbReference type="ChEBI" id="CHEBI:18248"/>
    </ligandPart>
</feature>
<feature type="binding site" description="axial binding residue" evidence="2">
    <location>
        <position position="182"/>
    </location>
    <ligand>
        <name>heme b</name>
        <dbReference type="ChEBI" id="CHEBI:60344"/>
        <label>b562</label>
    </ligand>
    <ligandPart>
        <name>Fe</name>
        <dbReference type="ChEBI" id="CHEBI:18248"/>
    </ligandPart>
</feature>
<feature type="binding site" description="axial binding residue" evidence="2">
    <location>
        <position position="196"/>
    </location>
    <ligand>
        <name>heme b</name>
        <dbReference type="ChEBI" id="CHEBI:60344"/>
        <label>b566</label>
    </ligand>
    <ligandPart>
        <name>Fe</name>
        <dbReference type="ChEBI" id="CHEBI:18248"/>
    </ligandPart>
</feature>
<feature type="binding site" evidence="2">
    <location>
        <position position="201"/>
    </location>
    <ligand>
        <name>a ubiquinone</name>
        <dbReference type="ChEBI" id="CHEBI:16389"/>
    </ligand>
</feature>
<geneLocation type="mitochondrion"/>